<organism>
    <name type="scientific">Salmonella paratyphi B (strain ATCC BAA-1250 / SPB7)</name>
    <dbReference type="NCBI Taxonomy" id="1016998"/>
    <lineage>
        <taxon>Bacteria</taxon>
        <taxon>Pseudomonadati</taxon>
        <taxon>Pseudomonadota</taxon>
        <taxon>Gammaproteobacteria</taxon>
        <taxon>Enterobacterales</taxon>
        <taxon>Enterobacteriaceae</taxon>
        <taxon>Salmonella</taxon>
    </lineage>
</organism>
<keyword id="KW-0028">Amino-acid biosynthesis</keyword>
<keyword id="KW-0057">Aromatic amino acid biosynthesis</keyword>
<keyword id="KW-0456">Lyase</keyword>
<keyword id="KW-0663">Pyridoxal phosphate</keyword>
<keyword id="KW-0822">Tryptophan biosynthesis</keyword>
<comment type="function">
    <text evidence="1">The beta subunit is responsible for the synthesis of L-tryptophan from indole and L-serine.</text>
</comment>
<comment type="catalytic activity">
    <reaction evidence="1">
        <text>(1S,2R)-1-C-(indol-3-yl)glycerol 3-phosphate + L-serine = D-glyceraldehyde 3-phosphate + L-tryptophan + H2O</text>
        <dbReference type="Rhea" id="RHEA:10532"/>
        <dbReference type="ChEBI" id="CHEBI:15377"/>
        <dbReference type="ChEBI" id="CHEBI:33384"/>
        <dbReference type="ChEBI" id="CHEBI:57912"/>
        <dbReference type="ChEBI" id="CHEBI:58866"/>
        <dbReference type="ChEBI" id="CHEBI:59776"/>
        <dbReference type="EC" id="4.2.1.20"/>
    </reaction>
</comment>
<comment type="cofactor">
    <cofactor evidence="1">
        <name>pyridoxal 5'-phosphate</name>
        <dbReference type="ChEBI" id="CHEBI:597326"/>
    </cofactor>
</comment>
<comment type="pathway">
    <text evidence="1">Amino-acid biosynthesis; L-tryptophan biosynthesis; L-tryptophan from chorismate: step 5/5.</text>
</comment>
<comment type="subunit">
    <text evidence="1">Tetramer of two alpha and two beta chains.</text>
</comment>
<comment type="similarity">
    <text evidence="1">Belongs to the TrpB family.</text>
</comment>
<accession>A9MWR4</accession>
<gene>
    <name evidence="1" type="primary">trpB</name>
    <name type="ordered locus">SPAB_01519</name>
</gene>
<dbReference type="EC" id="4.2.1.20" evidence="1"/>
<dbReference type="EMBL" id="CP000886">
    <property type="protein sequence ID" value="ABX66917.1"/>
    <property type="molecule type" value="Genomic_DNA"/>
</dbReference>
<dbReference type="RefSeq" id="WP_000209485.1">
    <property type="nucleotide sequence ID" value="NC_010102.1"/>
</dbReference>
<dbReference type="SMR" id="A9MWR4"/>
<dbReference type="KEGG" id="spq:SPAB_01519"/>
<dbReference type="PATRIC" id="fig|1016998.12.peg.1426"/>
<dbReference type="HOGENOM" id="CLU_016734_3_1_6"/>
<dbReference type="BioCyc" id="SENT1016998:SPAB_RS06180-MONOMER"/>
<dbReference type="UniPathway" id="UPA00035">
    <property type="reaction ID" value="UER00044"/>
</dbReference>
<dbReference type="Proteomes" id="UP000008556">
    <property type="component" value="Chromosome"/>
</dbReference>
<dbReference type="GO" id="GO:0005737">
    <property type="term" value="C:cytoplasm"/>
    <property type="evidence" value="ECO:0007669"/>
    <property type="project" value="TreeGrafter"/>
</dbReference>
<dbReference type="GO" id="GO:0004834">
    <property type="term" value="F:tryptophan synthase activity"/>
    <property type="evidence" value="ECO:0007669"/>
    <property type="project" value="UniProtKB-UniRule"/>
</dbReference>
<dbReference type="CDD" id="cd06446">
    <property type="entry name" value="Trp-synth_B"/>
    <property type="match status" value="1"/>
</dbReference>
<dbReference type="FunFam" id="3.40.50.1100:FF:000001">
    <property type="entry name" value="Tryptophan synthase beta chain"/>
    <property type="match status" value="1"/>
</dbReference>
<dbReference type="FunFam" id="3.40.50.1100:FF:000004">
    <property type="entry name" value="Tryptophan synthase beta chain"/>
    <property type="match status" value="1"/>
</dbReference>
<dbReference type="Gene3D" id="3.40.50.1100">
    <property type="match status" value="2"/>
</dbReference>
<dbReference type="HAMAP" id="MF_00133">
    <property type="entry name" value="Trp_synth_beta"/>
    <property type="match status" value="1"/>
</dbReference>
<dbReference type="InterPro" id="IPR006653">
    <property type="entry name" value="Trp_synth_b_CS"/>
</dbReference>
<dbReference type="InterPro" id="IPR006654">
    <property type="entry name" value="Trp_synth_beta"/>
</dbReference>
<dbReference type="InterPro" id="IPR023026">
    <property type="entry name" value="Trp_synth_beta/beta-like"/>
</dbReference>
<dbReference type="InterPro" id="IPR001926">
    <property type="entry name" value="TrpB-like_PALP"/>
</dbReference>
<dbReference type="InterPro" id="IPR036052">
    <property type="entry name" value="TrpB-like_PALP_sf"/>
</dbReference>
<dbReference type="NCBIfam" id="TIGR00263">
    <property type="entry name" value="trpB"/>
    <property type="match status" value="1"/>
</dbReference>
<dbReference type="PANTHER" id="PTHR48077:SF3">
    <property type="entry name" value="TRYPTOPHAN SYNTHASE"/>
    <property type="match status" value="1"/>
</dbReference>
<dbReference type="PANTHER" id="PTHR48077">
    <property type="entry name" value="TRYPTOPHAN SYNTHASE-RELATED"/>
    <property type="match status" value="1"/>
</dbReference>
<dbReference type="Pfam" id="PF00291">
    <property type="entry name" value="PALP"/>
    <property type="match status" value="1"/>
</dbReference>
<dbReference type="PIRSF" id="PIRSF001413">
    <property type="entry name" value="Trp_syn_beta"/>
    <property type="match status" value="1"/>
</dbReference>
<dbReference type="SUPFAM" id="SSF53686">
    <property type="entry name" value="Tryptophan synthase beta subunit-like PLP-dependent enzymes"/>
    <property type="match status" value="1"/>
</dbReference>
<dbReference type="PROSITE" id="PS00168">
    <property type="entry name" value="TRP_SYNTHASE_BETA"/>
    <property type="match status" value="1"/>
</dbReference>
<name>TRPB_SALPB</name>
<feature type="chain" id="PRO_1000076405" description="Tryptophan synthase beta chain">
    <location>
        <begin position="1"/>
        <end position="397"/>
    </location>
</feature>
<feature type="modified residue" description="N6-(pyridoxal phosphate)lysine" evidence="1">
    <location>
        <position position="87"/>
    </location>
</feature>
<evidence type="ECO:0000255" key="1">
    <source>
        <dbReference type="HAMAP-Rule" id="MF_00133"/>
    </source>
</evidence>
<proteinExistence type="inferred from homology"/>
<reference key="1">
    <citation type="submission" date="2007-11" db="EMBL/GenBank/DDBJ databases">
        <authorList>
            <consortium name="The Salmonella enterica serovar Paratyphi B Genome Sequencing Project"/>
            <person name="McClelland M."/>
            <person name="Sanderson E.K."/>
            <person name="Porwollik S."/>
            <person name="Spieth J."/>
            <person name="Clifton W.S."/>
            <person name="Fulton R."/>
            <person name="Cordes M."/>
            <person name="Wollam A."/>
            <person name="Shah N."/>
            <person name="Pepin K."/>
            <person name="Bhonagiri V."/>
            <person name="Nash W."/>
            <person name="Johnson M."/>
            <person name="Thiruvilangam P."/>
            <person name="Wilson R."/>
        </authorList>
    </citation>
    <scope>NUCLEOTIDE SEQUENCE [LARGE SCALE GENOMIC DNA]</scope>
    <source>
        <strain>ATCC BAA-1250 / SPB7</strain>
    </source>
</reference>
<protein>
    <recommendedName>
        <fullName evidence="1">Tryptophan synthase beta chain</fullName>
        <ecNumber evidence="1">4.2.1.20</ecNumber>
    </recommendedName>
</protein>
<sequence>MTTLLNPYFGEFGGMYVPQILMPALNQLEEAFVSAQKDPEFQAQFADLLKNYAGRPTALTKCQNITAGTRTTLYLKREDLLHGGAHKTNQVLGQALLAKRMGKSEIIAETGAGQHGVASALASALLGLKCRIYMGAKDVERQSPNVFRMRLMGAEVIPVHSGSATLKDACNEALRDWSGSYETAHYMLGTAAGPHPYPTIVREFQRMIGEETKAQILDKEGRLPDAVIACVGGGSNAIGMFADFINDTSVGLIGVEPGGHGIETGEHGAPLKHGRVGIYFGMKAPMMQTADGQIEESYSISAGLDFPSVGPQHAYLNSIGRADYVSITDDEALEAFKTLCRHEGIIPALESSHALAHALKMMREQPEKEQLLVVNLSGRGDKDIFTVHDILKARGEI</sequence>